<protein>
    <recommendedName>
        <fullName evidence="1">Dihydrophenazinedicarboxylate synthase</fullName>
        <ecNumber evidence="1">1.10.3.16</ecNumber>
    </recommendedName>
    <alternativeName>
        <fullName>Phenazine biosynthesis protein PhzD</fullName>
    </alternativeName>
</protein>
<comment type="function">
    <text evidence="1 4">Involved in the biosynthesis of the antibiotic phenazine, a nitrogen-containing heterocyclic molecule having important roles in virulence, competition and biological control (Probable). Catalyzes several oxidations in the terminal steps of core phenazine biosynthesis. It oxidizes both hexahydrophenazine-1,6-dicarboxylic acid (HHPDC) and tetrahydrophenazine-1-carboxylic acid (THPCA) and thereby contributes to the generation of both phenazine-1,6-dicarboxylic acid (PDC) and phenazine-1-carboxylic acid (PCA) (By similarity).</text>
</comment>
<comment type="catalytic activity">
    <reaction evidence="1">
        <text>(1R,6R)-1,4,5,5a,6,9-hexahydrophenazine-1,6-dicarboxylate + O2 = (1R,10aS)-1,4,10,10a-tetrahydrophenazine-1,6-dicarboxylate + H2O2</text>
        <dbReference type="Rhea" id="RHEA:49888"/>
        <dbReference type="ChEBI" id="CHEBI:15379"/>
        <dbReference type="ChEBI" id="CHEBI:16240"/>
        <dbReference type="ChEBI" id="CHEBI:131971"/>
        <dbReference type="ChEBI" id="CHEBI:131973"/>
        <dbReference type="EC" id="1.10.3.16"/>
    </reaction>
    <physiologicalReaction direction="left-to-right" evidence="1">
        <dbReference type="Rhea" id="RHEA:49889"/>
    </physiologicalReaction>
</comment>
<comment type="catalytic activity">
    <reaction evidence="1">
        <text>(1R,10aS)-1,4,10,10a-tetrahydrophenazine-1,6-dicarboxylate + O2 = (5aS)-5,5a-dihydrophenazine-1,6-dicarboxylate + H2O2</text>
        <dbReference type="Rhea" id="RHEA:49892"/>
        <dbReference type="ChEBI" id="CHEBI:15379"/>
        <dbReference type="ChEBI" id="CHEBI:16240"/>
        <dbReference type="ChEBI" id="CHEBI:131973"/>
        <dbReference type="ChEBI" id="CHEBI:131978"/>
        <dbReference type="EC" id="1.10.3.16"/>
    </reaction>
    <physiologicalReaction direction="left-to-right" evidence="1">
        <dbReference type="Rhea" id="RHEA:49893"/>
    </physiologicalReaction>
</comment>
<comment type="catalytic activity">
    <reaction evidence="1">
        <text>(1R,10aS)-1,4,10,10a-tetrahydrophenazine-1-carboxylate + O2 = (10aS)-10,10a-dihydrophenazine-1-carboxylate + H2O2</text>
        <dbReference type="Rhea" id="RHEA:49940"/>
        <dbReference type="ChEBI" id="CHEBI:15379"/>
        <dbReference type="ChEBI" id="CHEBI:16240"/>
        <dbReference type="ChEBI" id="CHEBI:131981"/>
        <dbReference type="ChEBI" id="CHEBI:132003"/>
        <dbReference type="EC" id="1.10.3.16"/>
    </reaction>
    <physiologicalReaction direction="left-to-right" evidence="1">
        <dbReference type="Rhea" id="RHEA:49941"/>
    </physiologicalReaction>
</comment>
<comment type="catalytic activity">
    <reaction evidence="1">
        <text>(1R)-1,4,5,10-tetrahydrophenazine-1-carboxylate + O2 = (10aS)-10,10a-dihydrophenazine-1-carboxylate + H2O2</text>
        <dbReference type="Rhea" id="RHEA:49948"/>
        <dbReference type="ChEBI" id="CHEBI:15379"/>
        <dbReference type="ChEBI" id="CHEBI:16240"/>
        <dbReference type="ChEBI" id="CHEBI:132003"/>
        <dbReference type="ChEBI" id="CHEBI:132005"/>
        <dbReference type="EC" id="1.10.3.16"/>
    </reaction>
    <physiologicalReaction direction="left-to-right" evidence="1">
        <dbReference type="Rhea" id="RHEA:49949"/>
    </physiologicalReaction>
</comment>
<comment type="cofactor">
    <cofactor evidence="1">
        <name>FMN</name>
        <dbReference type="ChEBI" id="CHEBI:58210"/>
    </cofactor>
    <text evidence="1">Binds 1 FMN per subunit.</text>
</comment>
<comment type="pathway">
    <text evidence="4">Antibiotic biosynthesis; phenazine biosynthesis.</text>
</comment>
<comment type="similarity">
    <text evidence="3">Belongs to the pyridoxamine 5'-phosphate oxidase family.</text>
</comment>
<evidence type="ECO:0000250" key="1">
    <source>
        <dbReference type="UniProtKB" id="Q51793"/>
    </source>
</evidence>
<evidence type="ECO:0000303" key="2">
    <source>
    </source>
</evidence>
<evidence type="ECO:0000305" key="3"/>
<evidence type="ECO:0000305" key="4">
    <source>
    </source>
</evidence>
<name>PHZD_PSECL</name>
<sequence length="222" mass="25030">MNSSVLGKPLLGKGMSESLTGTLDAPFPEYQKPPADPMSVLHNWLERARRVGIREPRALALATADSQGRPSTRIVVISEISDTGVLFSTHAGSQKGRELTENPWASGTLYWRETSQQIILNGQAVRMPDAKADEAWLKRPYATHPMSSVSRQSEELKDVQAMRNAARELAEVQGPLPRPEGYCVFELRLESLEFWGNGEERLHERLRYDRSAEGWKHRRLQP</sequence>
<proteinExistence type="inferred from homology"/>
<organism>
    <name type="scientific">Pseudomonas chlororaphis</name>
    <name type="common">Pseudomonas aureofaciens</name>
    <dbReference type="NCBI Taxonomy" id="333"/>
    <lineage>
        <taxon>Bacteria</taxon>
        <taxon>Pseudomonadati</taxon>
        <taxon>Pseudomonadota</taxon>
        <taxon>Gammaproteobacteria</taxon>
        <taxon>Pseudomonadales</taxon>
        <taxon>Pseudomonadaceae</taxon>
        <taxon>Pseudomonas</taxon>
    </lineage>
</organism>
<accession>Q51521</accession>
<gene>
    <name evidence="2" type="primary">phzD</name>
</gene>
<reference key="1">
    <citation type="journal article" date="1995" name="FEMS Microbiol. Lett.">
        <title>Molecular analysis of genes encoding phenazine biosynthesis in the biological control bacterium. Pseudomonas aureofaciens 30-84.</title>
        <authorList>
            <person name="Pierson L.S. III"/>
            <person name="Gaffney T."/>
            <person name="Lam S."/>
            <person name="Gong F."/>
        </authorList>
    </citation>
    <scope>NUCLEOTIDE SEQUENCE [GENOMIC DNA]</scope>
    <scope>PATHWAY</scope>
    <source>
        <strain>30-84</strain>
    </source>
</reference>
<dbReference type="EC" id="1.10.3.16" evidence="1"/>
<dbReference type="EMBL" id="L48339">
    <property type="protein sequence ID" value="AAB00332.1"/>
    <property type="molecule type" value="Genomic_DNA"/>
</dbReference>
<dbReference type="SMR" id="Q51521"/>
<dbReference type="BRENDA" id="3.3.2.15">
    <property type="organism ID" value="5105"/>
</dbReference>
<dbReference type="UniPathway" id="UPA00099"/>
<dbReference type="GO" id="GO:0010181">
    <property type="term" value="F:FMN binding"/>
    <property type="evidence" value="ECO:0007669"/>
    <property type="project" value="InterPro"/>
</dbReference>
<dbReference type="GO" id="GO:0004733">
    <property type="term" value="F:pyridoxamine phosphate oxidase activity"/>
    <property type="evidence" value="ECO:0007669"/>
    <property type="project" value="InterPro"/>
</dbReference>
<dbReference type="GO" id="GO:0002047">
    <property type="term" value="P:phenazine biosynthetic process"/>
    <property type="evidence" value="ECO:0007669"/>
    <property type="project" value="UniProtKB-UniPathway"/>
</dbReference>
<dbReference type="GO" id="GO:0008615">
    <property type="term" value="P:pyridoxine biosynthetic process"/>
    <property type="evidence" value="ECO:0007669"/>
    <property type="project" value="InterPro"/>
</dbReference>
<dbReference type="Gene3D" id="2.30.110.10">
    <property type="entry name" value="Electron Transport, Fmn-binding Protein, Chain A"/>
    <property type="match status" value="1"/>
</dbReference>
<dbReference type="InterPro" id="IPR053451">
    <property type="entry name" value="Phenazine_biosynth_oxidase"/>
</dbReference>
<dbReference type="InterPro" id="IPR000659">
    <property type="entry name" value="Pyridox_Oxase"/>
</dbReference>
<dbReference type="InterPro" id="IPR019740">
    <property type="entry name" value="Pyridox_Oxase_CS"/>
</dbReference>
<dbReference type="InterPro" id="IPR011576">
    <property type="entry name" value="Pyridox_Oxase_N"/>
</dbReference>
<dbReference type="InterPro" id="IPR019576">
    <property type="entry name" value="Pyridoxamine_oxidase_dimer_C"/>
</dbReference>
<dbReference type="InterPro" id="IPR012349">
    <property type="entry name" value="Split_barrel_FMN-bd"/>
</dbReference>
<dbReference type="NCBIfam" id="NF038138">
    <property type="entry name" value="phena_PhzG"/>
    <property type="match status" value="1"/>
</dbReference>
<dbReference type="NCBIfam" id="NF004231">
    <property type="entry name" value="PRK05679.1"/>
    <property type="match status" value="1"/>
</dbReference>
<dbReference type="PANTHER" id="PTHR10851:SF0">
    <property type="entry name" value="PYRIDOXINE-5'-PHOSPHATE OXIDASE"/>
    <property type="match status" value="1"/>
</dbReference>
<dbReference type="PANTHER" id="PTHR10851">
    <property type="entry name" value="PYRIDOXINE-5-PHOSPHATE OXIDASE"/>
    <property type="match status" value="1"/>
</dbReference>
<dbReference type="Pfam" id="PF10590">
    <property type="entry name" value="PNP_phzG_C"/>
    <property type="match status" value="1"/>
</dbReference>
<dbReference type="Pfam" id="PF01243">
    <property type="entry name" value="PNPOx_N"/>
    <property type="match status" value="1"/>
</dbReference>
<dbReference type="PIRSF" id="PIRSF000190">
    <property type="entry name" value="Pyd_amn-ph_oxd"/>
    <property type="match status" value="1"/>
</dbReference>
<dbReference type="SUPFAM" id="SSF50475">
    <property type="entry name" value="FMN-binding split barrel"/>
    <property type="match status" value="1"/>
</dbReference>
<dbReference type="PROSITE" id="PS01064">
    <property type="entry name" value="PYRIDOX_OXIDASE"/>
    <property type="match status" value="1"/>
</dbReference>
<keyword id="KW-0045">Antibiotic biosynthesis</keyword>
<keyword id="KW-0285">Flavoprotein</keyword>
<keyword id="KW-0288">FMN</keyword>
<keyword id="KW-0560">Oxidoreductase</keyword>
<keyword id="KW-0843">Virulence</keyword>
<feature type="chain" id="PRO_0000167789" description="Dihydrophenazinedicarboxylate synthase">
    <location>
        <begin position="1"/>
        <end position="222"/>
    </location>
</feature>
<feature type="binding site" evidence="1">
    <location>
        <position position="18"/>
    </location>
    <ligand>
        <name>substrate</name>
    </ligand>
</feature>
<feature type="binding site" evidence="1">
    <location>
        <begin position="73"/>
        <end position="76"/>
    </location>
    <ligand>
        <name>FMN</name>
        <dbReference type="ChEBI" id="CHEBI:58210"/>
    </ligand>
</feature>
<feature type="binding site" evidence="1">
    <location>
        <begin position="88"/>
        <end position="89"/>
    </location>
    <ligand>
        <name>FMN</name>
        <dbReference type="ChEBI" id="CHEBI:58210"/>
    </ligand>
</feature>
<feature type="binding site" evidence="1">
    <location>
        <position position="90"/>
    </location>
    <ligand>
        <name>substrate</name>
    </ligand>
</feature>
<feature type="binding site" evidence="1">
    <location>
        <begin position="94"/>
        <end position="95"/>
    </location>
    <ligand>
        <name>FMN</name>
        <dbReference type="ChEBI" id="CHEBI:58210"/>
    </ligand>
</feature>
<feature type="binding site" evidence="1">
    <location>
        <position position="117"/>
    </location>
    <ligand>
        <name>FMN</name>
        <dbReference type="ChEBI" id="CHEBI:58210"/>
    </ligand>
</feature>
<feature type="binding site" evidence="1">
    <location>
        <position position="139"/>
    </location>
    <ligand>
        <name>substrate</name>
    </ligand>
</feature>
<feature type="binding site" evidence="1">
    <location>
        <position position="147"/>
    </location>
    <ligand>
        <name>substrate</name>
    </ligand>
</feature>
<feature type="binding site" evidence="1">
    <location>
        <begin position="152"/>
        <end position="153"/>
    </location>
    <ligand>
        <name>FMN</name>
        <dbReference type="ChEBI" id="CHEBI:58210"/>
    </ligand>
</feature>
<feature type="binding site" evidence="1">
    <location>
        <position position="205"/>
    </location>
    <ligand>
        <name>FMN</name>
        <dbReference type="ChEBI" id="CHEBI:58210"/>
    </ligand>
</feature>